<proteinExistence type="inferred from homology"/>
<organism>
    <name type="scientific">Rickettsia bellii (strain OSU 85-389)</name>
    <dbReference type="NCBI Taxonomy" id="391896"/>
    <lineage>
        <taxon>Bacteria</taxon>
        <taxon>Pseudomonadati</taxon>
        <taxon>Pseudomonadota</taxon>
        <taxon>Alphaproteobacteria</taxon>
        <taxon>Rickettsiales</taxon>
        <taxon>Rickettsiaceae</taxon>
        <taxon>Rickettsieae</taxon>
        <taxon>Rickettsia</taxon>
        <taxon>belli group</taxon>
    </lineage>
</organism>
<feature type="chain" id="PRO_0000349072" description="Heme A synthase">
    <location>
        <begin position="1"/>
        <end position="336"/>
    </location>
</feature>
<feature type="transmembrane region" description="Helical" evidence="1">
    <location>
        <begin position="5"/>
        <end position="25"/>
    </location>
</feature>
<feature type="transmembrane region" description="Helical" evidence="1">
    <location>
        <begin position="92"/>
        <end position="112"/>
    </location>
</feature>
<feature type="transmembrane region" description="Helical" evidence="1">
    <location>
        <begin position="117"/>
        <end position="137"/>
    </location>
</feature>
<feature type="transmembrane region" description="Helical" evidence="1">
    <location>
        <begin position="153"/>
        <end position="173"/>
    </location>
</feature>
<feature type="transmembrane region" description="Helical" evidence="1">
    <location>
        <begin position="191"/>
        <end position="211"/>
    </location>
</feature>
<feature type="transmembrane region" description="Helical" evidence="1">
    <location>
        <begin position="257"/>
        <end position="277"/>
    </location>
</feature>
<feature type="transmembrane region" description="Helical" evidence="1">
    <location>
        <begin position="284"/>
        <end position="304"/>
    </location>
</feature>
<feature type="transmembrane region" description="Helical" evidence="1">
    <location>
        <begin position="307"/>
        <end position="327"/>
    </location>
</feature>
<feature type="binding site" description="axial binding residue" evidence="1">
    <location>
        <position position="255"/>
    </location>
    <ligand>
        <name>heme</name>
        <dbReference type="ChEBI" id="CHEBI:30413"/>
    </ligand>
    <ligandPart>
        <name>Fe</name>
        <dbReference type="ChEBI" id="CHEBI:18248"/>
    </ligandPart>
</feature>
<feature type="binding site" description="axial binding residue" evidence="1">
    <location>
        <position position="315"/>
    </location>
    <ligand>
        <name>heme</name>
        <dbReference type="ChEBI" id="CHEBI:30413"/>
    </ligand>
    <ligandPart>
        <name>Fe</name>
        <dbReference type="ChEBI" id="CHEBI:18248"/>
    </ligandPart>
</feature>
<keyword id="KW-1003">Cell membrane</keyword>
<keyword id="KW-0350">Heme biosynthesis</keyword>
<keyword id="KW-0408">Iron</keyword>
<keyword id="KW-0472">Membrane</keyword>
<keyword id="KW-0479">Metal-binding</keyword>
<keyword id="KW-0560">Oxidoreductase</keyword>
<keyword id="KW-0812">Transmembrane</keyword>
<keyword id="KW-1133">Transmembrane helix</keyword>
<dbReference type="EC" id="1.17.99.9" evidence="1"/>
<dbReference type="EMBL" id="CP000849">
    <property type="protein sequence ID" value="ABV79621.1"/>
    <property type="status" value="ALT_INIT"/>
    <property type="molecule type" value="Genomic_DNA"/>
</dbReference>
<dbReference type="RefSeq" id="WP_041808456.1">
    <property type="nucleotide sequence ID" value="NC_009883.1"/>
</dbReference>
<dbReference type="SMR" id="A8GXM1"/>
<dbReference type="KEGG" id="rbo:A1I_06525"/>
<dbReference type="HOGENOM" id="CLU_017627_0_0_5"/>
<dbReference type="UniPathway" id="UPA00269">
    <property type="reaction ID" value="UER00713"/>
</dbReference>
<dbReference type="GO" id="GO:0005886">
    <property type="term" value="C:plasma membrane"/>
    <property type="evidence" value="ECO:0007669"/>
    <property type="project" value="UniProtKB-SubCell"/>
</dbReference>
<dbReference type="GO" id="GO:0046872">
    <property type="term" value="F:metal ion binding"/>
    <property type="evidence" value="ECO:0007669"/>
    <property type="project" value="UniProtKB-KW"/>
</dbReference>
<dbReference type="GO" id="GO:0016653">
    <property type="term" value="F:oxidoreductase activity, acting on NAD(P)H, heme protein as acceptor"/>
    <property type="evidence" value="ECO:0007669"/>
    <property type="project" value="InterPro"/>
</dbReference>
<dbReference type="GO" id="GO:0006784">
    <property type="term" value="P:heme A biosynthetic process"/>
    <property type="evidence" value="ECO:0007669"/>
    <property type="project" value="UniProtKB-UniRule"/>
</dbReference>
<dbReference type="HAMAP" id="MF_01665">
    <property type="entry name" value="HemeA_synth_type2"/>
    <property type="match status" value="1"/>
</dbReference>
<dbReference type="InterPro" id="IPR003780">
    <property type="entry name" value="COX15/CtaA_fam"/>
</dbReference>
<dbReference type="InterPro" id="IPR023754">
    <property type="entry name" value="HemeA_Synthase_type2"/>
</dbReference>
<dbReference type="PANTHER" id="PTHR23289">
    <property type="entry name" value="CYTOCHROME C OXIDASE ASSEMBLY PROTEIN COX15"/>
    <property type="match status" value="1"/>
</dbReference>
<dbReference type="PANTHER" id="PTHR23289:SF2">
    <property type="entry name" value="CYTOCHROME C OXIDASE ASSEMBLY PROTEIN COX15 HOMOLOG"/>
    <property type="match status" value="1"/>
</dbReference>
<dbReference type="Pfam" id="PF02628">
    <property type="entry name" value="COX15-CtaA"/>
    <property type="match status" value="1"/>
</dbReference>
<sequence>MQKNLTRWLLTCCIMVVAMIIVGGITRLTDSGLSIVEWRPVTGILPPFSYDTWQAEFAKYKAFPEYNAVNYGMTLSEFKFIYLLEFVHRLLGRATGLIYILPLIYFYFKGIIKNRDILSYIIVLLLFCVQGFMGWYMVKSGLVNHPSVSHFRLAFHLIIAVIIYHLLFYKLVKNCCDILLIPSQINLKLPLIFSVAAIAMIYVQIFLGALVAGLDAGLIYNSFPLMGGNFIPIEIKDNFISFKNWYDPVFVQFMHRLGAYSLSIIVIALIISLLKVKNPKLNKVAFYLSIALLIQLSTGVITLLYHVPIIAASMHQFFAIVLLSVVIWCYSLIKNS</sequence>
<reference key="1">
    <citation type="submission" date="2007-09" db="EMBL/GenBank/DDBJ databases">
        <title>Complete genome sequencing of Rickettsia bellii.</title>
        <authorList>
            <person name="Madan A."/>
            <person name="Lee H."/>
            <person name="Madan A."/>
            <person name="Yoon J.-G."/>
            <person name="Ryu G.-Y."/>
            <person name="Dasch G."/>
            <person name="Ereemeva M."/>
        </authorList>
    </citation>
    <scope>NUCLEOTIDE SEQUENCE [LARGE SCALE GENOMIC DNA]</scope>
    <source>
        <strain>OSU 85-389</strain>
    </source>
</reference>
<comment type="function">
    <text evidence="1">Catalyzes the conversion of heme O to heme A by two successive hydroxylations of the methyl group at C8. The first hydroxylation forms heme I, the second hydroxylation results in an unstable dihydroxymethyl group, which spontaneously dehydrates, resulting in the formyl group of heme A.</text>
</comment>
<comment type="catalytic activity">
    <reaction evidence="1">
        <text>Fe(II)-heme o + 2 A + H2O = Fe(II)-heme a + 2 AH2</text>
        <dbReference type="Rhea" id="RHEA:63388"/>
        <dbReference type="ChEBI" id="CHEBI:13193"/>
        <dbReference type="ChEBI" id="CHEBI:15377"/>
        <dbReference type="ChEBI" id="CHEBI:17499"/>
        <dbReference type="ChEBI" id="CHEBI:60530"/>
        <dbReference type="ChEBI" id="CHEBI:61715"/>
        <dbReference type="EC" id="1.17.99.9"/>
    </reaction>
    <physiologicalReaction direction="left-to-right" evidence="1">
        <dbReference type="Rhea" id="RHEA:63389"/>
    </physiologicalReaction>
</comment>
<comment type="cofactor">
    <cofactor evidence="1">
        <name>heme b</name>
        <dbReference type="ChEBI" id="CHEBI:60344"/>
    </cofactor>
</comment>
<comment type="pathway">
    <text evidence="1">Porphyrin-containing compound metabolism; heme A biosynthesis; heme A from heme O: step 1/1.</text>
</comment>
<comment type="subunit">
    <text evidence="1">Interacts with CtaB.</text>
</comment>
<comment type="subcellular location">
    <subcellularLocation>
        <location evidence="1">Cell membrane</location>
        <topology evidence="1">Multi-pass membrane protein</topology>
    </subcellularLocation>
</comment>
<comment type="similarity">
    <text evidence="1">Belongs to the COX15/CtaA family. Type 2 subfamily.</text>
</comment>
<comment type="sequence caution" evidence="2">
    <conflict type="erroneous initiation">
        <sequence resource="EMBL-CDS" id="ABV79621"/>
    </conflict>
</comment>
<evidence type="ECO:0000255" key="1">
    <source>
        <dbReference type="HAMAP-Rule" id="MF_01665"/>
    </source>
</evidence>
<evidence type="ECO:0000305" key="2"/>
<name>CTAA_RICB8</name>
<accession>A8GXM1</accession>
<gene>
    <name evidence="1" type="primary">ctaA</name>
    <name type="ordered locus">A1I_06525</name>
</gene>
<protein>
    <recommendedName>
        <fullName evidence="1">Heme A synthase</fullName>
        <shortName evidence="1">HAS</shortName>
        <ecNumber evidence="1">1.17.99.9</ecNumber>
    </recommendedName>
    <alternativeName>
        <fullName evidence="1">Cytochrome aa3-controlling protein</fullName>
    </alternativeName>
</protein>